<reference key="1">
    <citation type="journal article" date="2002" name="Proc. Natl. Acad. Sci. U.S.A.">
        <title>Extensive mosaic structure revealed by the complete genome sequence of uropathogenic Escherichia coli.</title>
        <authorList>
            <person name="Welch R.A."/>
            <person name="Burland V."/>
            <person name="Plunkett G. III"/>
            <person name="Redford P."/>
            <person name="Roesch P."/>
            <person name="Rasko D."/>
            <person name="Buckles E.L."/>
            <person name="Liou S.-R."/>
            <person name="Boutin A."/>
            <person name="Hackett J."/>
            <person name="Stroud D."/>
            <person name="Mayhew G.F."/>
            <person name="Rose D.J."/>
            <person name="Zhou S."/>
            <person name="Schwartz D.C."/>
            <person name="Perna N.T."/>
            <person name="Mobley H.L.T."/>
            <person name="Donnenberg M.S."/>
            <person name="Blattner F.R."/>
        </authorList>
    </citation>
    <scope>NUCLEOTIDE SEQUENCE [LARGE SCALE GENOMIC DNA]</scope>
    <source>
        <strain>CFT073 / ATCC 700928 / UPEC</strain>
    </source>
</reference>
<proteinExistence type="inferred from homology"/>
<organism>
    <name type="scientific">Escherichia coli O6:H1 (strain CFT073 / ATCC 700928 / UPEC)</name>
    <dbReference type="NCBI Taxonomy" id="199310"/>
    <lineage>
        <taxon>Bacteria</taxon>
        <taxon>Pseudomonadati</taxon>
        <taxon>Pseudomonadota</taxon>
        <taxon>Gammaproteobacteria</taxon>
        <taxon>Enterobacterales</taxon>
        <taxon>Enterobacteriaceae</taxon>
        <taxon>Escherichia</taxon>
    </lineage>
</organism>
<name>POTA_ECOL6</name>
<keyword id="KW-0067">ATP-binding</keyword>
<keyword id="KW-0997">Cell inner membrane</keyword>
<keyword id="KW-1003">Cell membrane</keyword>
<keyword id="KW-0472">Membrane</keyword>
<keyword id="KW-0547">Nucleotide-binding</keyword>
<keyword id="KW-1185">Reference proteome</keyword>
<keyword id="KW-1278">Translocase</keyword>
<keyword id="KW-0813">Transport</keyword>
<protein>
    <recommendedName>
        <fullName evidence="1">Spermidine/putrescine import ATP-binding protein PotA</fullName>
        <ecNumber evidence="1">7.6.2.11</ecNumber>
    </recommendedName>
</protein>
<feature type="chain" id="PRO_0000092747" description="Spermidine/putrescine import ATP-binding protein PotA">
    <location>
        <begin position="1"/>
        <end position="378"/>
    </location>
</feature>
<feature type="domain" description="ABC transporter" evidence="1">
    <location>
        <begin position="18"/>
        <end position="248"/>
    </location>
</feature>
<feature type="binding site" evidence="1">
    <location>
        <begin position="50"/>
        <end position="57"/>
    </location>
    <ligand>
        <name>ATP</name>
        <dbReference type="ChEBI" id="CHEBI:30616"/>
    </ligand>
</feature>
<accession>P69875</accession>
<accession>P23858</accession>
<comment type="function">
    <text evidence="1">Part of the ABC transporter complex PotABCD involved in spermidine/putrescine import. Responsible for energy coupling to the transport system.</text>
</comment>
<comment type="catalytic activity">
    <reaction evidence="1">
        <text>ATP + H2O + polyamine-[polyamine-binding protein]Side 1 = ADP + phosphate + polyamineSide 2 + [polyamine-binding protein]Side 1.</text>
        <dbReference type="EC" id="7.6.2.11"/>
    </reaction>
</comment>
<comment type="subunit">
    <text evidence="1">The complex is composed of two ATP-binding proteins (PotA), two transmembrane proteins (PotB and PotC) and a solute-binding protein (PotD).</text>
</comment>
<comment type="subcellular location">
    <subcellularLocation>
        <location evidence="1">Cell inner membrane</location>
        <topology evidence="1">Peripheral membrane protein</topology>
    </subcellularLocation>
</comment>
<comment type="similarity">
    <text evidence="1">Belongs to the ABC transporter superfamily. Spermidine/putrescine importer (TC 3.A.1.11.1) family.</text>
</comment>
<sequence>MGQSKKLNKQPSSLSPLVQLAGIRKCFDGKEVIPQLDLTINNGEFLTLLGPSGCGKTTVLRLIAGLETVDSGRIMLDNEDITHVPAENRYVNTVFQSYALFPHMTVFENVAFGLRMQKTPAAEITPRVMEALRMVQLETFAQRKPHQLSGGQQQRVAIARAVVNKPRLLLLDESLSALDYKLRKQMQNELKALQRKLGITFVFVTHDQEEALTMSDRIVVMRDGRIEQDGTPREIYEEPKNLFVAGFIGEINMFNATVIERLDEQRVRANVEGRECNIYVNFAVEPGQKLHVLLRPEDLRVEEINDDNHAEGLIGYVRERNYKGMTLESVVELENGKMVMVSEFFNEDDPDFDHSLDQKMAINWVESWEVVLADEEHK</sequence>
<gene>
    <name evidence="1" type="primary">potA</name>
    <name type="ordered locus">c1477</name>
</gene>
<evidence type="ECO:0000255" key="1">
    <source>
        <dbReference type="HAMAP-Rule" id="MF_01726"/>
    </source>
</evidence>
<dbReference type="EC" id="7.6.2.11" evidence="1"/>
<dbReference type="EMBL" id="AE014075">
    <property type="protein sequence ID" value="AAN79946.1"/>
    <property type="molecule type" value="Genomic_DNA"/>
</dbReference>
<dbReference type="RefSeq" id="WP_000531594.1">
    <property type="nucleotide sequence ID" value="NZ_CP051263.1"/>
</dbReference>
<dbReference type="SMR" id="P69875"/>
<dbReference type="STRING" id="199310.c1477"/>
<dbReference type="GeneID" id="75203712"/>
<dbReference type="KEGG" id="ecc:c1477"/>
<dbReference type="eggNOG" id="COG3842">
    <property type="taxonomic scope" value="Bacteria"/>
</dbReference>
<dbReference type="HOGENOM" id="CLU_000604_1_1_6"/>
<dbReference type="BioCyc" id="ECOL199310:C1477-MONOMER"/>
<dbReference type="Proteomes" id="UP000001410">
    <property type="component" value="Chromosome"/>
</dbReference>
<dbReference type="GO" id="GO:0043190">
    <property type="term" value="C:ATP-binding cassette (ABC) transporter complex"/>
    <property type="evidence" value="ECO:0007669"/>
    <property type="project" value="InterPro"/>
</dbReference>
<dbReference type="GO" id="GO:0015594">
    <property type="term" value="F:ABC-type putrescine transporter activity"/>
    <property type="evidence" value="ECO:0007669"/>
    <property type="project" value="InterPro"/>
</dbReference>
<dbReference type="GO" id="GO:0005524">
    <property type="term" value="F:ATP binding"/>
    <property type="evidence" value="ECO:0007669"/>
    <property type="project" value="UniProtKB-KW"/>
</dbReference>
<dbReference type="GO" id="GO:0016887">
    <property type="term" value="F:ATP hydrolysis activity"/>
    <property type="evidence" value="ECO:0007669"/>
    <property type="project" value="InterPro"/>
</dbReference>
<dbReference type="CDD" id="cd03300">
    <property type="entry name" value="ABC_PotA_N"/>
    <property type="match status" value="1"/>
</dbReference>
<dbReference type="FunFam" id="2.40.50.100:FF:000017">
    <property type="entry name" value="Spermidine/putrescine import ATP-binding protein PotA"/>
    <property type="match status" value="1"/>
</dbReference>
<dbReference type="FunFam" id="3.40.50.300:FF:000133">
    <property type="entry name" value="Spermidine/putrescine import ATP-binding protein PotA"/>
    <property type="match status" value="1"/>
</dbReference>
<dbReference type="Gene3D" id="2.40.50.100">
    <property type="match status" value="1"/>
</dbReference>
<dbReference type="Gene3D" id="3.40.50.300">
    <property type="entry name" value="P-loop containing nucleotide triphosphate hydrolases"/>
    <property type="match status" value="1"/>
</dbReference>
<dbReference type="InterPro" id="IPR003593">
    <property type="entry name" value="AAA+_ATPase"/>
</dbReference>
<dbReference type="InterPro" id="IPR050093">
    <property type="entry name" value="ABC_SmlMolc_Importer"/>
</dbReference>
<dbReference type="InterPro" id="IPR003439">
    <property type="entry name" value="ABC_transporter-like_ATP-bd"/>
</dbReference>
<dbReference type="InterPro" id="IPR017871">
    <property type="entry name" value="ABC_transporter-like_CS"/>
</dbReference>
<dbReference type="InterPro" id="IPR008995">
    <property type="entry name" value="Mo/tungstate-bd_C_term_dom"/>
</dbReference>
<dbReference type="InterPro" id="IPR027417">
    <property type="entry name" value="P-loop_NTPase"/>
</dbReference>
<dbReference type="InterPro" id="IPR005893">
    <property type="entry name" value="PotA-like"/>
</dbReference>
<dbReference type="InterPro" id="IPR017879">
    <property type="entry name" value="PotA_ATP-bd"/>
</dbReference>
<dbReference type="InterPro" id="IPR013611">
    <property type="entry name" value="Transp-assoc_OB_typ2"/>
</dbReference>
<dbReference type="NCBIfam" id="TIGR01187">
    <property type="entry name" value="potA"/>
    <property type="match status" value="1"/>
</dbReference>
<dbReference type="NCBIfam" id="NF006987">
    <property type="entry name" value="PRK09452.1"/>
    <property type="match status" value="1"/>
</dbReference>
<dbReference type="PANTHER" id="PTHR42781">
    <property type="entry name" value="SPERMIDINE/PUTRESCINE IMPORT ATP-BINDING PROTEIN POTA"/>
    <property type="match status" value="1"/>
</dbReference>
<dbReference type="PANTHER" id="PTHR42781:SF4">
    <property type="entry name" value="SPERMIDINE_PUTRESCINE IMPORT ATP-BINDING PROTEIN POTA"/>
    <property type="match status" value="1"/>
</dbReference>
<dbReference type="Pfam" id="PF00005">
    <property type="entry name" value="ABC_tran"/>
    <property type="match status" value="1"/>
</dbReference>
<dbReference type="Pfam" id="PF08402">
    <property type="entry name" value="TOBE_2"/>
    <property type="match status" value="1"/>
</dbReference>
<dbReference type="SMART" id="SM00382">
    <property type="entry name" value="AAA"/>
    <property type="match status" value="1"/>
</dbReference>
<dbReference type="SUPFAM" id="SSF50331">
    <property type="entry name" value="MOP-like"/>
    <property type="match status" value="1"/>
</dbReference>
<dbReference type="SUPFAM" id="SSF52540">
    <property type="entry name" value="P-loop containing nucleoside triphosphate hydrolases"/>
    <property type="match status" value="1"/>
</dbReference>
<dbReference type="PROSITE" id="PS00211">
    <property type="entry name" value="ABC_TRANSPORTER_1"/>
    <property type="match status" value="1"/>
</dbReference>
<dbReference type="PROSITE" id="PS50893">
    <property type="entry name" value="ABC_TRANSPORTER_2"/>
    <property type="match status" value="1"/>
</dbReference>
<dbReference type="PROSITE" id="PS51305">
    <property type="entry name" value="POTA"/>
    <property type="match status" value="1"/>
</dbReference>